<organism>
    <name type="scientific">Dictyostelium discoideum</name>
    <name type="common">Social amoeba</name>
    <dbReference type="NCBI Taxonomy" id="44689"/>
    <lineage>
        <taxon>Eukaryota</taxon>
        <taxon>Amoebozoa</taxon>
        <taxon>Evosea</taxon>
        <taxon>Eumycetozoa</taxon>
        <taxon>Dictyostelia</taxon>
        <taxon>Dictyosteliales</taxon>
        <taxon>Dictyosteliaceae</taxon>
        <taxon>Dictyostelium</taxon>
    </lineage>
</organism>
<accession>Q54HI2</accession>
<comment type="subcellular location">
    <subcellularLocation>
        <location evidence="5">Membrane</location>
        <topology evidence="5">Multi-pass membrane protein</topology>
    </subcellularLocation>
</comment>
<comment type="similarity">
    <text evidence="5">Belongs to the SYG1 (TC 2.A.94) family.</text>
</comment>
<keyword id="KW-0472">Membrane</keyword>
<keyword id="KW-1185">Reference proteome</keyword>
<keyword id="KW-0812">Transmembrane</keyword>
<keyword id="KW-1133">Transmembrane helix</keyword>
<dbReference type="EMBL" id="AAFI02000140">
    <property type="protein sequence ID" value="EAL62739.1"/>
    <property type="molecule type" value="Genomic_DNA"/>
</dbReference>
<dbReference type="RefSeq" id="XP_636251.1">
    <property type="nucleotide sequence ID" value="XM_631159.1"/>
</dbReference>
<dbReference type="SMR" id="Q54HI2"/>
<dbReference type="FunCoup" id="Q54HI2">
    <property type="interactions" value="5"/>
</dbReference>
<dbReference type="STRING" id="44689.Q54HI2"/>
<dbReference type="GlyGen" id="Q54HI2">
    <property type="glycosylation" value="1 site"/>
</dbReference>
<dbReference type="PaxDb" id="44689-DDB0266496"/>
<dbReference type="EnsemblProtists" id="EAL62739">
    <property type="protein sequence ID" value="EAL62739"/>
    <property type="gene ID" value="DDB_G0289423"/>
</dbReference>
<dbReference type="GeneID" id="8627141"/>
<dbReference type="KEGG" id="ddi:DDB_G0289423"/>
<dbReference type="dictyBase" id="DDB_G0289423"/>
<dbReference type="VEuPathDB" id="AmoebaDB:DDB_G0289423"/>
<dbReference type="eggNOG" id="KOG1162">
    <property type="taxonomic scope" value="Eukaryota"/>
</dbReference>
<dbReference type="HOGENOM" id="CLU_290612_0_0_1"/>
<dbReference type="InParanoid" id="Q54HI2"/>
<dbReference type="OMA" id="CVELCNM"/>
<dbReference type="PhylomeDB" id="Q54HI2"/>
<dbReference type="PRO" id="PR:Q54HI2"/>
<dbReference type="Proteomes" id="UP000002195">
    <property type="component" value="Chromosome 5"/>
</dbReference>
<dbReference type="GO" id="GO:0005886">
    <property type="term" value="C:plasma membrane"/>
    <property type="evidence" value="ECO:0000318"/>
    <property type="project" value="GO_Central"/>
</dbReference>
<dbReference type="GO" id="GO:0000822">
    <property type="term" value="F:inositol hexakisphosphate binding"/>
    <property type="evidence" value="ECO:0000318"/>
    <property type="project" value="GO_Central"/>
</dbReference>
<dbReference type="GO" id="GO:0005315">
    <property type="term" value="F:phosphate transmembrane transporter activity"/>
    <property type="evidence" value="ECO:0000318"/>
    <property type="project" value="GO_Central"/>
</dbReference>
<dbReference type="GO" id="GO:0016036">
    <property type="term" value="P:cellular response to phosphate starvation"/>
    <property type="evidence" value="ECO:0000318"/>
    <property type="project" value="GO_Central"/>
</dbReference>
<dbReference type="GO" id="GO:0006817">
    <property type="term" value="P:phosphate ion transport"/>
    <property type="evidence" value="ECO:0000318"/>
    <property type="project" value="GO_Central"/>
</dbReference>
<dbReference type="CDD" id="cd14447">
    <property type="entry name" value="SPX"/>
    <property type="match status" value="1"/>
</dbReference>
<dbReference type="InterPro" id="IPR004342">
    <property type="entry name" value="EXS_C"/>
</dbReference>
<dbReference type="InterPro" id="IPR004331">
    <property type="entry name" value="SPX_dom"/>
</dbReference>
<dbReference type="PANTHER" id="PTHR10783:SF78">
    <property type="entry name" value="SPX AND EXS DOMAIN-CONTAINING PROTEIN 2-RELATED"/>
    <property type="match status" value="1"/>
</dbReference>
<dbReference type="PANTHER" id="PTHR10783">
    <property type="entry name" value="XENOTROPIC AND POLYTROPIC RETROVIRUS RECEPTOR 1-RELATED"/>
    <property type="match status" value="1"/>
</dbReference>
<dbReference type="Pfam" id="PF03124">
    <property type="entry name" value="EXS"/>
    <property type="match status" value="1"/>
</dbReference>
<dbReference type="Pfam" id="PF03105">
    <property type="entry name" value="SPX"/>
    <property type="match status" value="1"/>
</dbReference>
<dbReference type="PROSITE" id="PS51380">
    <property type="entry name" value="EXS"/>
    <property type="match status" value="1"/>
</dbReference>
<dbReference type="PROSITE" id="PS51382">
    <property type="entry name" value="SPX"/>
    <property type="match status" value="1"/>
</dbReference>
<proteinExistence type="inferred from homology"/>
<protein>
    <recommendedName>
        <fullName>SPX and EXS domain-containing protein 4</fullName>
    </recommendedName>
</protein>
<feature type="chain" id="PRO_0000330823" description="SPX and EXS domain-containing protein 4">
    <location>
        <begin position="1"/>
        <end position="1081"/>
    </location>
</feature>
<feature type="transmembrane region" description="Helical" evidence="1">
    <location>
        <begin position="536"/>
        <end position="556"/>
    </location>
</feature>
<feature type="transmembrane region" description="Helical" evidence="1">
    <location>
        <begin position="573"/>
        <end position="593"/>
    </location>
</feature>
<feature type="transmembrane region" description="Helical" evidence="1">
    <location>
        <begin position="622"/>
        <end position="642"/>
    </location>
</feature>
<feature type="transmembrane region" description="Helical" evidence="1">
    <location>
        <begin position="654"/>
        <end position="674"/>
    </location>
</feature>
<feature type="transmembrane region" description="Helical" evidence="1">
    <location>
        <begin position="703"/>
        <end position="723"/>
    </location>
</feature>
<feature type="transmembrane region" description="Helical" evidence="1">
    <location>
        <begin position="776"/>
        <end position="796"/>
    </location>
</feature>
<feature type="transmembrane region" description="Helical" evidence="1">
    <location>
        <begin position="803"/>
        <end position="823"/>
    </location>
</feature>
<feature type="transmembrane region" description="Helical" evidence="1">
    <location>
        <begin position="854"/>
        <end position="874"/>
    </location>
</feature>
<feature type="transmembrane region" description="Helical" evidence="1">
    <location>
        <begin position="887"/>
        <end position="907"/>
    </location>
</feature>
<feature type="domain" description="SPX" evidence="3">
    <location>
        <begin position="1"/>
        <end position="483"/>
    </location>
</feature>
<feature type="domain" description="EXS" evidence="2">
    <location>
        <begin position="738"/>
        <end position="940"/>
    </location>
</feature>
<feature type="region of interest" description="Disordered" evidence="4">
    <location>
        <begin position="86"/>
        <end position="118"/>
    </location>
</feature>
<feature type="region of interest" description="Disordered" evidence="4">
    <location>
        <begin position="160"/>
        <end position="271"/>
    </location>
</feature>
<feature type="region of interest" description="Disordered" evidence="4">
    <location>
        <begin position="318"/>
        <end position="354"/>
    </location>
</feature>
<feature type="region of interest" description="Disordered" evidence="4">
    <location>
        <begin position="939"/>
        <end position="1031"/>
    </location>
</feature>
<feature type="compositionally biased region" description="Low complexity" evidence="4">
    <location>
        <begin position="90"/>
        <end position="110"/>
    </location>
</feature>
<feature type="compositionally biased region" description="Low complexity" evidence="4">
    <location>
        <begin position="161"/>
        <end position="196"/>
    </location>
</feature>
<feature type="compositionally biased region" description="Low complexity" evidence="4">
    <location>
        <begin position="211"/>
        <end position="228"/>
    </location>
</feature>
<feature type="compositionally biased region" description="Acidic residues" evidence="4">
    <location>
        <begin position="244"/>
        <end position="264"/>
    </location>
</feature>
<feature type="compositionally biased region" description="Basic and acidic residues" evidence="4">
    <location>
        <begin position="319"/>
        <end position="336"/>
    </location>
</feature>
<feature type="compositionally biased region" description="Low complexity" evidence="4">
    <location>
        <begin position="337"/>
        <end position="349"/>
    </location>
</feature>
<feature type="compositionally biased region" description="Basic residues" evidence="4">
    <location>
        <begin position="942"/>
        <end position="951"/>
    </location>
</feature>
<feature type="compositionally biased region" description="Low complexity" evidence="4">
    <location>
        <begin position="952"/>
        <end position="970"/>
    </location>
</feature>
<feature type="compositionally biased region" description="Polar residues" evidence="4">
    <location>
        <begin position="977"/>
        <end position="1003"/>
    </location>
</feature>
<feature type="compositionally biased region" description="Basic and acidic residues" evidence="4">
    <location>
        <begin position="1013"/>
        <end position="1022"/>
    </location>
</feature>
<reference key="1">
    <citation type="journal article" date="2005" name="Nature">
        <title>The genome of the social amoeba Dictyostelium discoideum.</title>
        <authorList>
            <person name="Eichinger L."/>
            <person name="Pachebat J.A."/>
            <person name="Gloeckner G."/>
            <person name="Rajandream M.A."/>
            <person name="Sucgang R."/>
            <person name="Berriman M."/>
            <person name="Song J."/>
            <person name="Olsen R."/>
            <person name="Szafranski K."/>
            <person name="Xu Q."/>
            <person name="Tunggal B."/>
            <person name="Kummerfeld S."/>
            <person name="Madera M."/>
            <person name="Konfortov B.A."/>
            <person name="Rivero F."/>
            <person name="Bankier A.T."/>
            <person name="Lehmann R."/>
            <person name="Hamlin N."/>
            <person name="Davies R."/>
            <person name="Gaudet P."/>
            <person name="Fey P."/>
            <person name="Pilcher K."/>
            <person name="Chen G."/>
            <person name="Saunders D."/>
            <person name="Sodergren E.J."/>
            <person name="Davis P."/>
            <person name="Kerhornou A."/>
            <person name="Nie X."/>
            <person name="Hall N."/>
            <person name="Anjard C."/>
            <person name="Hemphill L."/>
            <person name="Bason N."/>
            <person name="Farbrother P."/>
            <person name="Desany B."/>
            <person name="Just E."/>
            <person name="Morio T."/>
            <person name="Rost R."/>
            <person name="Churcher C.M."/>
            <person name="Cooper J."/>
            <person name="Haydock S."/>
            <person name="van Driessche N."/>
            <person name="Cronin A."/>
            <person name="Goodhead I."/>
            <person name="Muzny D.M."/>
            <person name="Mourier T."/>
            <person name="Pain A."/>
            <person name="Lu M."/>
            <person name="Harper D."/>
            <person name="Lindsay R."/>
            <person name="Hauser H."/>
            <person name="James K.D."/>
            <person name="Quiles M."/>
            <person name="Madan Babu M."/>
            <person name="Saito T."/>
            <person name="Buchrieser C."/>
            <person name="Wardroper A."/>
            <person name="Felder M."/>
            <person name="Thangavelu M."/>
            <person name="Johnson D."/>
            <person name="Knights A."/>
            <person name="Loulseged H."/>
            <person name="Mungall K.L."/>
            <person name="Oliver K."/>
            <person name="Price C."/>
            <person name="Quail M.A."/>
            <person name="Urushihara H."/>
            <person name="Hernandez J."/>
            <person name="Rabbinowitsch E."/>
            <person name="Steffen D."/>
            <person name="Sanders M."/>
            <person name="Ma J."/>
            <person name="Kohara Y."/>
            <person name="Sharp S."/>
            <person name="Simmonds M.N."/>
            <person name="Spiegler S."/>
            <person name="Tivey A."/>
            <person name="Sugano S."/>
            <person name="White B."/>
            <person name="Walker D."/>
            <person name="Woodward J.R."/>
            <person name="Winckler T."/>
            <person name="Tanaka Y."/>
            <person name="Shaulsky G."/>
            <person name="Schleicher M."/>
            <person name="Weinstock G.M."/>
            <person name="Rosenthal A."/>
            <person name="Cox E.C."/>
            <person name="Chisholm R.L."/>
            <person name="Gibbs R.A."/>
            <person name="Loomis W.F."/>
            <person name="Platzer M."/>
            <person name="Kay R.R."/>
            <person name="Williams J.G."/>
            <person name="Dear P.H."/>
            <person name="Noegel A.A."/>
            <person name="Barrell B.G."/>
            <person name="Kuspa A."/>
        </authorList>
    </citation>
    <scope>NUCLEOTIDE SEQUENCE [LARGE SCALE GENOMIC DNA]</scope>
    <source>
        <strain>AX4</strain>
    </source>
</reference>
<sequence>MKFRDLLNDHIISHWRDKYIDYEYLKDLIDREYHNAPNSLNNSMMIDMSQSINNTIAEQYSVNDISSMVTKGGINDSPTTDIEVDETADSPAIPSPIISHSNINSNNNNNGGTNSVGFSHLHRQLNRQNSNLKNSSNSINLLKADDSNNIEKHVKSYFDQRNNNNNINNINNNNNNNSNNSNNSNNNKTIKNTRNIIADDDGGNEDTTLGSPFSSPSIGSPPMSSPSPKMLKQELHSPLLTSEKDEDEEEEGEEEEDIEMEQLELDDHDKNTTINMTANGSRGNLRKGMNQFVKTIPQNIKQLNSQISNSFLKFGGMVKGDKSNDKNNDKSNDKNNNKNNKNNNNNNNLNDEDNFDMMTSQIEKVLNNKDNMKLMESCTFTTKENFQTAFVDQVNKVDSFFVERYRKTKEKCVELCNMIPFLSTNEQLRTIRNIEFVKQGFQDNYHYLESLEAFKELNIKGFKKVLEKYEKKNRIISSECRKYLENTRIFENDSPVRFLSHRIKHLYARYFTGNDVKLASNQIKTYAEDERFQKYNLFTIGLLIGVCIVLGIQVVFNYYYYYPHEQPPIDSPLAWLLFRISLLPILLGTMFSLMSFIWEKSGINYVFIFEFKPDHKRSPGRYLKYGLIFNTLWLLALNLYIDSSSHQNTTRYLILIPIVFVLITLIIGIQPFPIMAHRTRFWVLKKIVKVVSAPWVPVRFPDFFMSVQLLSLGEFLFNIQSMVCVFNYSALDPEEVKFCSQSRFFALPVLNALPYWWRVAQCFRRYYETRQFFPHITSAIRSIFSIIALVLNYIALEYSQHDWSIIKIAWFGINVVGSFYKFYADMSVDWGFFNNYKTNPAWPLREKLVFKKKWIYYVAITLDFFLRFTWLIIFSIRKGSKHRLDNPLFLFFFSLTEVVWATQFIFFRVESEHVQSPDTYSSFQDIPIPFSQEYNNYMDEKKKRRKRKQKQSKSNNNNNNNNNNNNNNNNRLHHNDSSNNVETDETITSSNNTDSSHQKQPLTHNRHHNHNHNHQDHHDLSINDHMNPDTGDINFDSKIDYKDDEAYNLRQSSLRTSISRNASHVDLGRVSSHNDLNISRG</sequence>
<gene>
    <name type="ORF">DDB_G0289423</name>
</gene>
<name>SPXS4_DICDI</name>
<evidence type="ECO:0000255" key="1"/>
<evidence type="ECO:0000255" key="2">
    <source>
        <dbReference type="PROSITE-ProRule" id="PRU00712"/>
    </source>
</evidence>
<evidence type="ECO:0000255" key="3">
    <source>
        <dbReference type="PROSITE-ProRule" id="PRU00714"/>
    </source>
</evidence>
<evidence type="ECO:0000256" key="4">
    <source>
        <dbReference type="SAM" id="MobiDB-lite"/>
    </source>
</evidence>
<evidence type="ECO:0000305" key="5"/>